<proteinExistence type="inferred from homology"/>
<keyword id="KW-0963">Cytoplasm</keyword>
<keyword id="KW-0255">Endonuclease</keyword>
<keyword id="KW-0378">Hydrolase</keyword>
<keyword id="KW-0460">Magnesium</keyword>
<keyword id="KW-0479">Metal-binding</keyword>
<keyword id="KW-0507">mRNA processing</keyword>
<keyword id="KW-0540">Nuclease</keyword>
<keyword id="KW-0694">RNA-binding</keyword>
<keyword id="KW-0698">rRNA processing</keyword>
<keyword id="KW-0699">rRNA-binding</keyword>
<keyword id="KW-0819">tRNA processing</keyword>
<dbReference type="EC" id="3.1.26.3" evidence="1"/>
<dbReference type="EMBL" id="CR628336">
    <property type="protein sequence ID" value="CAH12986.1"/>
    <property type="molecule type" value="Genomic_DNA"/>
</dbReference>
<dbReference type="RefSeq" id="WP_011214117.1">
    <property type="nucleotide sequence ID" value="NC_006368.1"/>
</dbReference>
<dbReference type="SMR" id="Q5X446"/>
<dbReference type="KEGG" id="lpp:lpp1834"/>
<dbReference type="LegioList" id="lpp1834"/>
<dbReference type="HOGENOM" id="CLU_000907_1_1_6"/>
<dbReference type="GO" id="GO:0005737">
    <property type="term" value="C:cytoplasm"/>
    <property type="evidence" value="ECO:0007669"/>
    <property type="project" value="UniProtKB-SubCell"/>
</dbReference>
<dbReference type="GO" id="GO:0003725">
    <property type="term" value="F:double-stranded RNA binding"/>
    <property type="evidence" value="ECO:0007669"/>
    <property type="project" value="TreeGrafter"/>
</dbReference>
<dbReference type="GO" id="GO:0046872">
    <property type="term" value="F:metal ion binding"/>
    <property type="evidence" value="ECO:0007669"/>
    <property type="project" value="UniProtKB-KW"/>
</dbReference>
<dbReference type="GO" id="GO:0004525">
    <property type="term" value="F:ribonuclease III activity"/>
    <property type="evidence" value="ECO:0007669"/>
    <property type="project" value="UniProtKB-UniRule"/>
</dbReference>
<dbReference type="GO" id="GO:0019843">
    <property type="term" value="F:rRNA binding"/>
    <property type="evidence" value="ECO:0007669"/>
    <property type="project" value="UniProtKB-KW"/>
</dbReference>
<dbReference type="GO" id="GO:0006397">
    <property type="term" value="P:mRNA processing"/>
    <property type="evidence" value="ECO:0007669"/>
    <property type="project" value="UniProtKB-UniRule"/>
</dbReference>
<dbReference type="GO" id="GO:0010468">
    <property type="term" value="P:regulation of gene expression"/>
    <property type="evidence" value="ECO:0007669"/>
    <property type="project" value="TreeGrafter"/>
</dbReference>
<dbReference type="GO" id="GO:0006364">
    <property type="term" value="P:rRNA processing"/>
    <property type="evidence" value="ECO:0007669"/>
    <property type="project" value="UniProtKB-UniRule"/>
</dbReference>
<dbReference type="GO" id="GO:0008033">
    <property type="term" value="P:tRNA processing"/>
    <property type="evidence" value="ECO:0007669"/>
    <property type="project" value="UniProtKB-KW"/>
</dbReference>
<dbReference type="CDD" id="cd10845">
    <property type="entry name" value="DSRM_RNAse_III_family"/>
    <property type="match status" value="1"/>
</dbReference>
<dbReference type="CDD" id="cd00593">
    <property type="entry name" value="RIBOc"/>
    <property type="match status" value="1"/>
</dbReference>
<dbReference type="FunFam" id="1.10.1520.10:FF:000001">
    <property type="entry name" value="Ribonuclease 3"/>
    <property type="match status" value="1"/>
</dbReference>
<dbReference type="FunFam" id="3.30.160.20:FF:000003">
    <property type="entry name" value="Ribonuclease 3"/>
    <property type="match status" value="1"/>
</dbReference>
<dbReference type="Gene3D" id="3.30.160.20">
    <property type="match status" value="1"/>
</dbReference>
<dbReference type="Gene3D" id="1.10.1520.10">
    <property type="entry name" value="Ribonuclease III domain"/>
    <property type="match status" value="1"/>
</dbReference>
<dbReference type="HAMAP" id="MF_00104">
    <property type="entry name" value="RNase_III"/>
    <property type="match status" value="1"/>
</dbReference>
<dbReference type="InterPro" id="IPR014720">
    <property type="entry name" value="dsRBD_dom"/>
</dbReference>
<dbReference type="InterPro" id="IPR011907">
    <property type="entry name" value="RNase_III"/>
</dbReference>
<dbReference type="InterPro" id="IPR000999">
    <property type="entry name" value="RNase_III_dom"/>
</dbReference>
<dbReference type="InterPro" id="IPR036389">
    <property type="entry name" value="RNase_III_sf"/>
</dbReference>
<dbReference type="NCBIfam" id="TIGR02191">
    <property type="entry name" value="RNaseIII"/>
    <property type="match status" value="1"/>
</dbReference>
<dbReference type="PANTHER" id="PTHR11207:SF0">
    <property type="entry name" value="RIBONUCLEASE 3"/>
    <property type="match status" value="1"/>
</dbReference>
<dbReference type="PANTHER" id="PTHR11207">
    <property type="entry name" value="RIBONUCLEASE III"/>
    <property type="match status" value="1"/>
</dbReference>
<dbReference type="Pfam" id="PF00035">
    <property type="entry name" value="dsrm"/>
    <property type="match status" value="1"/>
</dbReference>
<dbReference type="Pfam" id="PF14622">
    <property type="entry name" value="Ribonucleas_3_3"/>
    <property type="match status" value="1"/>
</dbReference>
<dbReference type="SMART" id="SM00358">
    <property type="entry name" value="DSRM"/>
    <property type="match status" value="1"/>
</dbReference>
<dbReference type="SMART" id="SM00535">
    <property type="entry name" value="RIBOc"/>
    <property type="match status" value="1"/>
</dbReference>
<dbReference type="SUPFAM" id="SSF54768">
    <property type="entry name" value="dsRNA-binding domain-like"/>
    <property type="match status" value="1"/>
</dbReference>
<dbReference type="SUPFAM" id="SSF69065">
    <property type="entry name" value="RNase III domain-like"/>
    <property type="match status" value="1"/>
</dbReference>
<dbReference type="PROSITE" id="PS50137">
    <property type="entry name" value="DS_RBD"/>
    <property type="match status" value="1"/>
</dbReference>
<dbReference type="PROSITE" id="PS00517">
    <property type="entry name" value="RNASE_3_1"/>
    <property type="match status" value="1"/>
</dbReference>
<dbReference type="PROSITE" id="PS50142">
    <property type="entry name" value="RNASE_3_2"/>
    <property type="match status" value="1"/>
</dbReference>
<name>RNC_LEGPA</name>
<organism>
    <name type="scientific">Legionella pneumophila (strain Paris)</name>
    <dbReference type="NCBI Taxonomy" id="297246"/>
    <lineage>
        <taxon>Bacteria</taxon>
        <taxon>Pseudomonadati</taxon>
        <taxon>Pseudomonadota</taxon>
        <taxon>Gammaproteobacteria</taxon>
        <taxon>Legionellales</taxon>
        <taxon>Legionellaceae</taxon>
        <taxon>Legionella</taxon>
    </lineage>
</organism>
<sequence length="224" mass="25136">MKINLERLCRRLNYHFNNIAYLKQALTHCSAGSDNYERFEFLGDSILSFVIANELFNRFPLHSEGQLSRLRSFLVKGEMLAEIAREIGLGDYLFLGQGELRSGGFRRTSILADALEAILAAIYLDGGMTAAKQIILMLYSSRLDDPDLNHCLKDAKTQLQEFLQASKFALPEYVLTKIEGDEHAQIFHVTCTIEGVSQVAYGTGPNRRKAEQLAAKAMLEQLQG</sequence>
<accession>Q5X446</accession>
<feature type="chain" id="PRO_0000228543" description="Ribonuclease 3">
    <location>
        <begin position="1"/>
        <end position="224"/>
    </location>
</feature>
<feature type="domain" description="RNase III" evidence="1">
    <location>
        <begin position="5"/>
        <end position="127"/>
    </location>
</feature>
<feature type="domain" description="DRBM" evidence="1">
    <location>
        <begin position="154"/>
        <end position="224"/>
    </location>
</feature>
<feature type="active site" evidence="1">
    <location>
        <position position="44"/>
    </location>
</feature>
<feature type="active site" evidence="1">
    <location>
        <position position="116"/>
    </location>
</feature>
<feature type="binding site" evidence="1">
    <location>
        <position position="40"/>
    </location>
    <ligand>
        <name>Mg(2+)</name>
        <dbReference type="ChEBI" id="CHEBI:18420"/>
    </ligand>
</feature>
<feature type="binding site" evidence="1">
    <location>
        <position position="113"/>
    </location>
    <ligand>
        <name>Mg(2+)</name>
        <dbReference type="ChEBI" id="CHEBI:18420"/>
    </ligand>
</feature>
<feature type="binding site" evidence="1">
    <location>
        <position position="116"/>
    </location>
    <ligand>
        <name>Mg(2+)</name>
        <dbReference type="ChEBI" id="CHEBI:18420"/>
    </ligand>
</feature>
<evidence type="ECO:0000255" key="1">
    <source>
        <dbReference type="HAMAP-Rule" id="MF_00104"/>
    </source>
</evidence>
<gene>
    <name evidence="1" type="primary">rnc</name>
    <name type="ordered locus">lpp1834</name>
</gene>
<comment type="function">
    <text evidence="1">Digests double-stranded RNA. Involved in the processing of primary rRNA transcript to yield the immediate precursors to the large and small rRNAs (23S and 16S). Processes some mRNAs, and tRNAs when they are encoded in the rRNA operon. Processes pre-crRNA and tracrRNA of type II CRISPR loci if present in the organism.</text>
</comment>
<comment type="catalytic activity">
    <reaction evidence="1">
        <text>Endonucleolytic cleavage to 5'-phosphomonoester.</text>
        <dbReference type="EC" id="3.1.26.3"/>
    </reaction>
</comment>
<comment type="cofactor">
    <cofactor evidence="1">
        <name>Mg(2+)</name>
        <dbReference type="ChEBI" id="CHEBI:18420"/>
    </cofactor>
</comment>
<comment type="subunit">
    <text evidence="1">Homodimer.</text>
</comment>
<comment type="subcellular location">
    <subcellularLocation>
        <location evidence="1">Cytoplasm</location>
    </subcellularLocation>
</comment>
<comment type="similarity">
    <text evidence="1">Belongs to the ribonuclease III family.</text>
</comment>
<protein>
    <recommendedName>
        <fullName evidence="1">Ribonuclease 3</fullName>
        <ecNumber evidence="1">3.1.26.3</ecNumber>
    </recommendedName>
    <alternativeName>
        <fullName evidence="1">Ribonuclease III</fullName>
        <shortName evidence="1">RNase III</shortName>
    </alternativeName>
</protein>
<reference key="1">
    <citation type="journal article" date="2004" name="Nat. Genet.">
        <title>Evidence in the Legionella pneumophila genome for exploitation of host cell functions and high genome plasticity.</title>
        <authorList>
            <person name="Cazalet C."/>
            <person name="Rusniok C."/>
            <person name="Brueggemann H."/>
            <person name="Zidane N."/>
            <person name="Magnier A."/>
            <person name="Ma L."/>
            <person name="Tichit M."/>
            <person name="Jarraud S."/>
            <person name="Bouchier C."/>
            <person name="Vandenesch F."/>
            <person name="Kunst F."/>
            <person name="Etienne J."/>
            <person name="Glaser P."/>
            <person name="Buchrieser C."/>
        </authorList>
    </citation>
    <scope>NUCLEOTIDE SEQUENCE [LARGE SCALE GENOMIC DNA]</scope>
    <source>
        <strain>Paris</strain>
    </source>
</reference>